<protein>
    <recommendedName>
        <fullName evidence="1">Small ribosomal subunit protein uS4</fullName>
    </recommendedName>
    <alternativeName>
        <fullName evidence="2">30S ribosomal protein S4</fullName>
    </alternativeName>
</protein>
<name>RS4_ECOBW</name>
<reference key="1">
    <citation type="journal article" date="2009" name="J. Bacteriol.">
        <title>Genomic sequencing reveals regulatory mutations and recombinational events in the widely used MC4100 lineage of Escherichia coli K-12.</title>
        <authorList>
            <person name="Ferenci T."/>
            <person name="Zhou Z."/>
            <person name="Betteridge T."/>
            <person name="Ren Y."/>
            <person name="Liu Y."/>
            <person name="Feng L."/>
            <person name="Reeves P.R."/>
            <person name="Wang L."/>
        </authorList>
    </citation>
    <scope>NUCLEOTIDE SEQUENCE [LARGE SCALE GENOMIC DNA]</scope>
    <source>
        <strain>K12 / MC4100 / BW2952</strain>
    </source>
</reference>
<feature type="chain" id="PRO_1000214286" description="Small ribosomal subunit protein uS4">
    <location>
        <begin position="1"/>
        <end position="206"/>
    </location>
</feature>
<feature type="domain" description="S4 RNA-binding" evidence="1">
    <location>
        <begin position="96"/>
        <end position="156"/>
    </location>
</feature>
<keyword id="KW-0687">Ribonucleoprotein</keyword>
<keyword id="KW-0689">Ribosomal protein</keyword>
<keyword id="KW-0694">RNA-binding</keyword>
<keyword id="KW-0699">rRNA-binding</keyword>
<proteinExistence type="inferred from homology"/>
<comment type="function">
    <text evidence="1">One of the primary rRNA binding proteins, it binds directly to 16S rRNA where it nucleates assembly of the body of the 30S subunit.</text>
</comment>
<comment type="function">
    <text evidence="1">With S5 and S12 plays an important role in translational accuracy.</text>
</comment>
<comment type="subunit">
    <text evidence="1">Part of the 30S ribosomal subunit. Contacts protein S5. The interaction surface between S4 and S5 is involved in control of translational fidelity.</text>
</comment>
<comment type="similarity">
    <text evidence="1">Belongs to the universal ribosomal protein uS4 family.</text>
</comment>
<organism>
    <name type="scientific">Escherichia coli (strain K12 / MC4100 / BW2952)</name>
    <dbReference type="NCBI Taxonomy" id="595496"/>
    <lineage>
        <taxon>Bacteria</taxon>
        <taxon>Pseudomonadati</taxon>
        <taxon>Pseudomonadota</taxon>
        <taxon>Gammaproteobacteria</taxon>
        <taxon>Enterobacterales</taxon>
        <taxon>Enterobacteriaceae</taxon>
        <taxon>Escherichia</taxon>
    </lineage>
</organism>
<sequence length="206" mass="23469">MARYLGPKLKLSRREGTDLFLKSGVRAIDTKCKIEQAPGQHGARKPRLSDYGVQLREKQKVRRIYGVLERQFRNYYKEAARLKGNTGENLLALLEGRLDNVVYRMGFGATRAEARQLVSHKAIMVNGRVVNIASYQVSPNDVVSIREKAKKQSRVKAALELAEQREKPTWLEVDAGKMEGTFKRKPERSDLSADINEHLIVELYSK</sequence>
<accession>C4ZUF1</accession>
<evidence type="ECO:0000255" key="1">
    <source>
        <dbReference type="HAMAP-Rule" id="MF_01306"/>
    </source>
</evidence>
<evidence type="ECO:0000305" key="2"/>
<gene>
    <name evidence="1" type="primary">rpsD</name>
    <name type="ordered locus">BWG_2987</name>
</gene>
<dbReference type="EMBL" id="CP001396">
    <property type="protein sequence ID" value="ACR61797.1"/>
    <property type="molecule type" value="Genomic_DNA"/>
</dbReference>
<dbReference type="RefSeq" id="WP_000135224.1">
    <property type="nucleotide sequence ID" value="NC_012759.1"/>
</dbReference>
<dbReference type="EMDB" id="EMD-51615"/>
<dbReference type="EMDB" id="EMD-51618"/>
<dbReference type="EMDB" id="EMD-51619"/>
<dbReference type="EMDB" id="EMD-51620"/>
<dbReference type="EMDB" id="EMD-51621"/>
<dbReference type="EMDB" id="EMD-51622"/>
<dbReference type="EMDB" id="EMD-51623"/>
<dbReference type="SMR" id="C4ZUF1"/>
<dbReference type="GeneID" id="93778691"/>
<dbReference type="KEGG" id="ebw:BWG_2987"/>
<dbReference type="HOGENOM" id="CLU_092403_0_2_6"/>
<dbReference type="GO" id="GO:0015935">
    <property type="term" value="C:small ribosomal subunit"/>
    <property type="evidence" value="ECO:0007669"/>
    <property type="project" value="InterPro"/>
</dbReference>
<dbReference type="GO" id="GO:0019843">
    <property type="term" value="F:rRNA binding"/>
    <property type="evidence" value="ECO:0007669"/>
    <property type="project" value="UniProtKB-UniRule"/>
</dbReference>
<dbReference type="GO" id="GO:0003735">
    <property type="term" value="F:structural constituent of ribosome"/>
    <property type="evidence" value="ECO:0007669"/>
    <property type="project" value="InterPro"/>
</dbReference>
<dbReference type="GO" id="GO:0042274">
    <property type="term" value="P:ribosomal small subunit biogenesis"/>
    <property type="evidence" value="ECO:0007669"/>
    <property type="project" value="TreeGrafter"/>
</dbReference>
<dbReference type="GO" id="GO:0006412">
    <property type="term" value="P:translation"/>
    <property type="evidence" value="ECO:0007669"/>
    <property type="project" value="UniProtKB-UniRule"/>
</dbReference>
<dbReference type="CDD" id="cd00165">
    <property type="entry name" value="S4"/>
    <property type="match status" value="1"/>
</dbReference>
<dbReference type="FunFam" id="1.10.1050.10:FF:000001">
    <property type="entry name" value="30S ribosomal protein S4"/>
    <property type="match status" value="1"/>
</dbReference>
<dbReference type="FunFam" id="3.10.290.10:FF:000001">
    <property type="entry name" value="30S ribosomal protein S4"/>
    <property type="match status" value="1"/>
</dbReference>
<dbReference type="Gene3D" id="1.10.1050.10">
    <property type="entry name" value="Ribosomal Protein S4 Delta 41, Chain A, domain 1"/>
    <property type="match status" value="1"/>
</dbReference>
<dbReference type="Gene3D" id="3.10.290.10">
    <property type="entry name" value="RNA-binding S4 domain"/>
    <property type="match status" value="1"/>
</dbReference>
<dbReference type="HAMAP" id="MF_01306_B">
    <property type="entry name" value="Ribosomal_uS4_B"/>
    <property type="match status" value="1"/>
</dbReference>
<dbReference type="InterPro" id="IPR022801">
    <property type="entry name" value="Ribosomal_uS4"/>
</dbReference>
<dbReference type="InterPro" id="IPR005709">
    <property type="entry name" value="Ribosomal_uS4_bac-type"/>
</dbReference>
<dbReference type="InterPro" id="IPR018079">
    <property type="entry name" value="Ribosomal_uS4_CS"/>
</dbReference>
<dbReference type="InterPro" id="IPR001912">
    <property type="entry name" value="Ribosomal_uS4_N"/>
</dbReference>
<dbReference type="InterPro" id="IPR002942">
    <property type="entry name" value="S4_RNA-bd"/>
</dbReference>
<dbReference type="InterPro" id="IPR036986">
    <property type="entry name" value="S4_RNA-bd_sf"/>
</dbReference>
<dbReference type="NCBIfam" id="NF003717">
    <property type="entry name" value="PRK05327.1"/>
    <property type="match status" value="1"/>
</dbReference>
<dbReference type="NCBIfam" id="TIGR01017">
    <property type="entry name" value="rpsD_bact"/>
    <property type="match status" value="1"/>
</dbReference>
<dbReference type="PANTHER" id="PTHR11831">
    <property type="entry name" value="30S 40S RIBOSOMAL PROTEIN"/>
    <property type="match status" value="1"/>
</dbReference>
<dbReference type="PANTHER" id="PTHR11831:SF4">
    <property type="entry name" value="SMALL RIBOSOMAL SUBUNIT PROTEIN US4M"/>
    <property type="match status" value="1"/>
</dbReference>
<dbReference type="Pfam" id="PF00163">
    <property type="entry name" value="Ribosomal_S4"/>
    <property type="match status" value="1"/>
</dbReference>
<dbReference type="Pfam" id="PF01479">
    <property type="entry name" value="S4"/>
    <property type="match status" value="1"/>
</dbReference>
<dbReference type="SMART" id="SM01390">
    <property type="entry name" value="Ribosomal_S4"/>
    <property type="match status" value="1"/>
</dbReference>
<dbReference type="SMART" id="SM00363">
    <property type="entry name" value="S4"/>
    <property type="match status" value="1"/>
</dbReference>
<dbReference type="SUPFAM" id="SSF55174">
    <property type="entry name" value="Alpha-L RNA-binding motif"/>
    <property type="match status" value="1"/>
</dbReference>
<dbReference type="PROSITE" id="PS00632">
    <property type="entry name" value="RIBOSOMAL_S4"/>
    <property type="match status" value="1"/>
</dbReference>
<dbReference type="PROSITE" id="PS50889">
    <property type="entry name" value="S4"/>
    <property type="match status" value="1"/>
</dbReference>